<organism>
    <name type="scientific">Nitratidesulfovibrio vulgaris (strain DP4)</name>
    <name type="common">Desulfovibrio vulgaris</name>
    <dbReference type="NCBI Taxonomy" id="391774"/>
    <lineage>
        <taxon>Bacteria</taxon>
        <taxon>Pseudomonadati</taxon>
        <taxon>Thermodesulfobacteriota</taxon>
        <taxon>Desulfovibrionia</taxon>
        <taxon>Desulfovibrionales</taxon>
        <taxon>Desulfovibrionaceae</taxon>
        <taxon>Nitratidesulfovibrio</taxon>
    </lineage>
</organism>
<protein>
    <recommendedName>
        <fullName evidence="1">Elongation factor G</fullName>
        <shortName evidence="1">EF-G</shortName>
    </recommendedName>
</protein>
<comment type="function">
    <text evidence="1">Catalyzes the GTP-dependent ribosomal translocation step during translation elongation. During this step, the ribosome changes from the pre-translocational (PRE) to the post-translocational (POST) state as the newly formed A-site-bound peptidyl-tRNA and P-site-bound deacylated tRNA move to the P and E sites, respectively. Catalyzes the coordinated movement of the two tRNA molecules, the mRNA and conformational changes in the ribosome.</text>
</comment>
<comment type="subcellular location">
    <subcellularLocation>
        <location evidence="1">Cytoplasm</location>
    </subcellularLocation>
</comment>
<comment type="similarity">
    <text evidence="1">Belongs to the TRAFAC class translation factor GTPase superfamily. Classic translation factor GTPase family. EF-G/EF-2 subfamily.</text>
</comment>
<reference key="1">
    <citation type="journal article" date="2009" name="Environ. Microbiol.">
        <title>Contribution of mobile genetic elements to Desulfovibrio vulgaris genome plasticity.</title>
        <authorList>
            <person name="Walker C.B."/>
            <person name="Stolyar S."/>
            <person name="Chivian D."/>
            <person name="Pinel N."/>
            <person name="Gabster J.A."/>
            <person name="Dehal P.S."/>
            <person name="He Z."/>
            <person name="Yang Z.K."/>
            <person name="Yen H.C."/>
            <person name="Zhou J."/>
            <person name="Wall J.D."/>
            <person name="Hazen T.C."/>
            <person name="Arkin A.P."/>
            <person name="Stahl D.A."/>
        </authorList>
    </citation>
    <scope>NUCLEOTIDE SEQUENCE [LARGE SCALE GENOMIC DNA]</scope>
    <source>
        <strain>DP4</strain>
    </source>
</reference>
<feature type="chain" id="PRO_1000008819" description="Elongation factor G">
    <location>
        <begin position="1"/>
        <end position="691"/>
    </location>
</feature>
<feature type="domain" description="tr-type G">
    <location>
        <begin position="8"/>
        <end position="283"/>
    </location>
</feature>
<feature type="binding site" evidence="1">
    <location>
        <begin position="17"/>
        <end position="24"/>
    </location>
    <ligand>
        <name>GTP</name>
        <dbReference type="ChEBI" id="CHEBI:37565"/>
    </ligand>
</feature>
<feature type="binding site" evidence="1">
    <location>
        <begin position="81"/>
        <end position="85"/>
    </location>
    <ligand>
        <name>GTP</name>
        <dbReference type="ChEBI" id="CHEBI:37565"/>
    </ligand>
</feature>
<feature type="binding site" evidence="1">
    <location>
        <begin position="135"/>
        <end position="138"/>
    </location>
    <ligand>
        <name>GTP</name>
        <dbReference type="ChEBI" id="CHEBI:37565"/>
    </ligand>
</feature>
<sequence length="691" mass="76010">MARVVPIDMQRNIGIMAHIDAGKTTTTERILFYTGVSHKIGEVHDGAATMDWMEQEQERGITITSAATTCFWREHRVNIIDTPGHVDFTIEVERSLRVLDGAVCVFDAVAGVEPQSETVWRQADRYGVPRICFVNKMDRIGASFERCVGMIRDRLRAKPIPVQLPIGAEDRFEGVIDLITGKAVTFDKASKGQTFNVGDVPAEYRDQYDAMRFEMIEAVAEEDEALMEKYLGGEELTVEEIISCVRKATIARNIVPVLCGSAFRNMGVQPLLDAVVDFLPSPVDIEQMKGVNPDKEEETIVCPCDDKEPLAALVFKLFSDPYIGHLSFCRIYSGFIESGMTVLNANTGKRERVGRLLKMHANKREEIKWAGAGDIVALVGLKLASTGDTICDEKRPVVLESLDIPEPVIEVAIEPKTKADRDALSAALAKLAKEDPSFRVKGDDETNQTLIAGMGELHLEIIVDRLTREFSVNANVGKPQVAYRETITKPGKADTKHVKQSGGRGQYGHAVIEIEPNPGKGYEFVNSITGGVIPKEYIAPIDKGIQDALKSGILSGFPTVDIKVNLVFGSYHDVDSSEQAFYVTGSMAIKEAIAKSGPVLLEPIMDVEVVTPDEYLGDVMGDLNGRRGKVQSMEARVGAQSIRAQVPLSEMFGYATDLRSKTQGRATFSMQFHHYERVPAALAEELVKKKG</sequence>
<dbReference type="EMBL" id="CP000527">
    <property type="protein sequence ID" value="ABM28785.1"/>
    <property type="molecule type" value="Genomic_DNA"/>
</dbReference>
<dbReference type="RefSeq" id="WP_010938595.1">
    <property type="nucleotide sequence ID" value="NC_008751.1"/>
</dbReference>
<dbReference type="SMR" id="A1VEB9"/>
<dbReference type="KEGG" id="dvl:Dvul_1768"/>
<dbReference type="HOGENOM" id="CLU_002794_4_1_7"/>
<dbReference type="Proteomes" id="UP000009173">
    <property type="component" value="Chromosome"/>
</dbReference>
<dbReference type="GO" id="GO:0005737">
    <property type="term" value="C:cytoplasm"/>
    <property type="evidence" value="ECO:0007669"/>
    <property type="project" value="UniProtKB-SubCell"/>
</dbReference>
<dbReference type="GO" id="GO:0005525">
    <property type="term" value="F:GTP binding"/>
    <property type="evidence" value="ECO:0007669"/>
    <property type="project" value="UniProtKB-UniRule"/>
</dbReference>
<dbReference type="GO" id="GO:0003924">
    <property type="term" value="F:GTPase activity"/>
    <property type="evidence" value="ECO:0007669"/>
    <property type="project" value="InterPro"/>
</dbReference>
<dbReference type="GO" id="GO:0003746">
    <property type="term" value="F:translation elongation factor activity"/>
    <property type="evidence" value="ECO:0007669"/>
    <property type="project" value="UniProtKB-UniRule"/>
</dbReference>
<dbReference type="GO" id="GO:0032790">
    <property type="term" value="P:ribosome disassembly"/>
    <property type="evidence" value="ECO:0007669"/>
    <property type="project" value="TreeGrafter"/>
</dbReference>
<dbReference type="CDD" id="cd01886">
    <property type="entry name" value="EF-G"/>
    <property type="match status" value="1"/>
</dbReference>
<dbReference type="CDD" id="cd16262">
    <property type="entry name" value="EFG_III"/>
    <property type="match status" value="1"/>
</dbReference>
<dbReference type="CDD" id="cd01434">
    <property type="entry name" value="EFG_mtEFG1_IV"/>
    <property type="match status" value="1"/>
</dbReference>
<dbReference type="CDD" id="cd03713">
    <property type="entry name" value="EFG_mtEFG_C"/>
    <property type="match status" value="1"/>
</dbReference>
<dbReference type="CDD" id="cd04088">
    <property type="entry name" value="EFG_mtEFG_II"/>
    <property type="match status" value="1"/>
</dbReference>
<dbReference type="FunFam" id="2.40.30.10:FF:000006">
    <property type="entry name" value="Elongation factor G"/>
    <property type="match status" value="1"/>
</dbReference>
<dbReference type="FunFam" id="3.30.230.10:FF:000003">
    <property type="entry name" value="Elongation factor G"/>
    <property type="match status" value="1"/>
</dbReference>
<dbReference type="FunFam" id="3.30.70.240:FF:000001">
    <property type="entry name" value="Elongation factor G"/>
    <property type="match status" value="1"/>
</dbReference>
<dbReference type="FunFam" id="3.30.70.870:FF:000001">
    <property type="entry name" value="Elongation factor G"/>
    <property type="match status" value="1"/>
</dbReference>
<dbReference type="FunFam" id="3.40.50.300:FF:000029">
    <property type="entry name" value="Elongation factor G"/>
    <property type="match status" value="1"/>
</dbReference>
<dbReference type="Gene3D" id="3.30.230.10">
    <property type="match status" value="1"/>
</dbReference>
<dbReference type="Gene3D" id="3.30.70.240">
    <property type="match status" value="1"/>
</dbReference>
<dbReference type="Gene3D" id="3.30.70.870">
    <property type="entry name" value="Elongation Factor G (Translational Gtpase), domain 3"/>
    <property type="match status" value="1"/>
</dbReference>
<dbReference type="Gene3D" id="3.40.50.300">
    <property type="entry name" value="P-loop containing nucleotide triphosphate hydrolases"/>
    <property type="match status" value="1"/>
</dbReference>
<dbReference type="Gene3D" id="2.40.30.10">
    <property type="entry name" value="Translation factors"/>
    <property type="match status" value="1"/>
</dbReference>
<dbReference type="HAMAP" id="MF_00054_B">
    <property type="entry name" value="EF_G_EF_2_B"/>
    <property type="match status" value="1"/>
</dbReference>
<dbReference type="InterPro" id="IPR053905">
    <property type="entry name" value="EF-G-like_DII"/>
</dbReference>
<dbReference type="InterPro" id="IPR041095">
    <property type="entry name" value="EFG_II"/>
</dbReference>
<dbReference type="InterPro" id="IPR009022">
    <property type="entry name" value="EFG_III"/>
</dbReference>
<dbReference type="InterPro" id="IPR035647">
    <property type="entry name" value="EFG_III/V"/>
</dbReference>
<dbReference type="InterPro" id="IPR047872">
    <property type="entry name" value="EFG_IV"/>
</dbReference>
<dbReference type="InterPro" id="IPR035649">
    <property type="entry name" value="EFG_V"/>
</dbReference>
<dbReference type="InterPro" id="IPR000640">
    <property type="entry name" value="EFG_V-like"/>
</dbReference>
<dbReference type="InterPro" id="IPR031157">
    <property type="entry name" value="G_TR_CS"/>
</dbReference>
<dbReference type="InterPro" id="IPR027417">
    <property type="entry name" value="P-loop_NTPase"/>
</dbReference>
<dbReference type="InterPro" id="IPR020568">
    <property type="entry name" value="Ribosomal_Su5_D2-typ_SF"/>
</dbReference>
<dbReference type="InterPro" id="IPR014721">
    <property type="entry name" value="Ribsml_uS5_D2-typ_fold_subgr"/>
</dbReference>
<dbReference type="InterPro" id="IPR005225">
    <property type="entry name" value="Small_GTP-bd"/>
</dbReference>
<dbReference type="InterPro" id="IPR000795">
    <property type="entry name" value="T_Tr_GTP-bd_dom"/>
</dbReference>
<dbReference type="InterPro" id="IPR009000">
    <property type="entry name" value="Transl_B-barrel_sf"/>
</dbReference>
<dbReference type="InterPro" id="IPR004540">
    <property type="entry name" value="Transl_elong_EFG/EF2"/>
</dbReference>
<dbReference type="InterPro" id="IPR005517">
    <property type="entry name" value="Transl_elong_EFG/EF2_IV"/>
</dbReference>
<dbReference type="NCBIfam" id="TIGR00484">
    <property type="entry name" value="EF-G"/>
    <property type="match status" value="1"/>
</dbReference>
<dbReference type="NCBIfam" id="NF009379">
    <property type="entry name" value="PRK12740.1-3"/>
    <property type="match status" value="1"/>
</dbReference>
<dbReference type="NCBIfam" id="NF009381">
    <property type="entry name" value="PRK12740.1-5"/>
    <property type="match status" value="1"/>
</dbReference>
<dbReference type="NCBIfam" id="TIGR00231">
    <property type="entry name" value="small_GTP"/>
    <property type="match status" value="1"/>
</dbReference>
<dbReference type="PANTHER" id="PTHR43261:SF1">
    <property type="entry name" value="RIBOSOME-RELEASING FACTOR 2, MITOCHONDRIAL"/>
    <property type="match status" value="1"/>
</dbReference>
<dbReference type="PANTHER" id="PTHR43261">
    <property type="entry name" value="TRANSLATION ELONGATION FACTOR G-RELATED"/>
    <property type="match status" value="1"/>
</dbReference>
<dbReference type="Pfam" id="PF22042">
    <property type="entry name" value="EF-G_D2"/>
    <property type="match status" value="1"/>
</dbReference>
<dbReference type="Pfam" id="PF00679">
    <property type="entry name" value="EFG_C"/>
    <property type="match status" value="1"/>
</dbReference>
<dbReference type="Pfam" id="PF14492">
    <property type="entry name" value="EFG_III"/>
    <property type="match status" value="1"/>
</dbReference>
<dbReference type="Pfam" id="PF03764">
    <property type="entry name" value="EFG_IV"/>
    <property type="match status" value="1"/>
</dbReference>
<dbReference type="Pfam" id="PF00009">
    <property type="entry name" value="GTP_EFTU"/>
    <property type="match status" value="1"/>
</dbReference>
<dbReference type="PRINTS" id="PR00315">
    <property type="entry name" value="ELONGATNFCT"/>
</dbReference>
<dbReference type="SMART" id="SM00838">
    <property type="entry name" value="EFG_C"/>
    <property type="match status" value="1"/>
</dbReference>
<dbReference type="SMART" id="SM00889">
    <property type="entry name" value="EFG_IV"/>
    <property type="match status" value="1"/>
</dbReference>
<dbReference type="SUPFAM" id="SSF54980">
    <property type="entry name" value="EF-G C-terminal domain-like"/>
    <property type="match status" value="2"/>
</dbReference>
<dbReference type="SUPFAM" id="SSF52540">
    <property type="entry name" value="P-loop containing nucleoside triphosphate hydrolases"/>
    <property type="match status" value="1"/>
</dbReference>
<dbReference type="SUPFAM" id="SSF54211">
    <property type="entry name" value="Ribosomal protein S5 domain 2-like"/>
    <property type="match status" value="1"/>
</dbReference>
<dbReference type="SUPFAM" id="SSF50447">
    <property type="entry name" value="Translation proteins"/>
    <property type="match status" value="1"/>
</dbReference>
<dbReference type="PROSITE" id="PS00301">
    <property type="entry name" value="G_TR_1"/>
    <property type="match status" value="1"/>
</dbReference>
<dbReference type="PROSITE" id="PS51722">
    <property type="entry name" value="G_TR_2"/>
    <property type="match status" value="1"/>
</dbReference>
<evidence type="ECO:0000255" key="1">
    <source>
        <dbReference type="HAMAP-Rule" id="MF_00054"/>
    </source>
</evidence>
<keyword id="KW-0963">Cytoplasm</keyword>
<keyword id="KW-0251">Elongation factor</keyword>
<keyword id="KW-0342">GTP-binding</keyword>
<keyword id="KW-0547">Nucleotide-binding</keyword>
<keyword id="KW-0648">Protein biosynthesis</keyword>
<proteinExistence type="inferred from homology"/>
<name>EFG_NITV4</name>
<gene>
    <name evidence="1" type="primary">fusA</name>
    <name type="ordered locus">Dvul_1768</name>
</gene>
<accession>A1VEB9</accession>